<accession>Q8FE70</accession>
<keyword id="KW-0963">Cytoplasm</keyword>
<keyword id="KW-0290">Folate-binding</keyword>
<keyword id="KW-1185">Reference proteome</keyword>
<keyword id="KW-0819">tRNA processing</keyword>
<proteinExistence type="inferred from homology"/>
<evidence type="ECO:0000250" key="1"/>
<evidence type="ECO:0000255" key="2">
    <source>
        <dbReference type="HAMAP-Rule" id="MF_01175"/>
    </source>
</evidence>
<comment type="function">
    <text evidence="2">Folate-binding protein involved in regulating the level of ATP-DnaA and in the modification of some tRNAs. It is probably a key factor in regulatory networks that act via tRNA modification, such as initiation of chromosomal replication.</text>
</comment>
<comment type="subcellular location">
    <subcellularLocation>
        <location evidence="2">Cytoplasm</location>
    </subcellularLocation>
</comment>
<comment type="similarity">
    <text evidence="2">Belongs to the tRNA-modifying YgfZ family.</text>
</comment>
<gene>
    <name evidence="2" type="primary">ygfZ</name>
    <name type="ordered locus">c3479</name>
</gene>
<sequence>MAFTPFPPRQPTASARLPLTLMTLDDWALATITGADSEKYMQGQVTADVSQMTEDQHLLAAHCDAKGKMWSNLRLFRDGDGFAWIERRSVREPQLTELKKYAVFSKVTIAPDDERVLLGVAGFQARAALANLFSELPSREKQVVKEGATTLLWFEHPAERFLIVTDEATANMLTDKLRGEAELNNSQQWLALNIEAGFPVIDAANSGQFIPQATNLQALGGISFKKGCYTGQEMVARAKFRGANKRALWLLKGSASRLPEAGEDLELKMGENWRRTGTVLATVKLEDGQVVVQVVMNNDMEPDSIFRVRDDANTLRIEPLPYSLEE</sequence>
<dbReference type="EMBL" id="AE014075">
    <property type="protein sequence ID" value="AAN81927.1"/>
    <property type="molecule type" value="Genomic_DNA"/>
</dbReference>
<dbReference type="RefSeq" id="WP_000886079.1">
    <property type="nucleotide sequence ID" value="NZ_CP051263.1"/>
</dbReference>
<dbReference type="SMR" id="Q8FE70"/>
<dbReference type="STRING" id="199310.c3479"/>
<dbReference type="KEGG" id="ecc:c3479"/>
<dbReference type="eggNOG" id="COG0354">
    <property type="taxonomic scope" value="Bacteria"/>
</dbReference>
<dbReference type="HOGENOM" id="CLU_007884_6_1_6"/>
<dbReference type="BioCyc" id="ECOL199310:C3479-MONOMER"/>
<dbReference type="Proteomes" id="UP000001410">
    <property type="component" value="Chromosome"/>
</dbReference>
<dbReference type="GO" id="GO:0005737">
    <property type="term" value="C:cytoplasm"/>
    <property type="evidence" value="ECO:0007669"/>
    <property type="project" value="UniProtKB-SubCell"/>
</dbReference>
<dbReference type="GO" id="GO:0005542">
    <property type="term" value="F:folic acid binding"/>
    <property type="evidence" value="ECO:0007669"/>
    <property type="project" value="UniProtKB-UniRule"/>
</dbReference>
<dbReference type="GO" id="GO:0016226">
    <property type="term" value="P:iron-sulfur cluster assembly"/>
    <property type="evidence" value="ECO:0007669"/>
    <property type="project" value="TreeGrafter"/>
</dbReference>
<dbReference type="GO" id="GO:0009451">
    <property type="term" value="P:RNA modification"/>
    <property type="evidence" value="ECO:0007669"/>
    <property type="project" value="InterPro"/>
</dbReference>
<dbReference type="GO" id="GO:0008033">
    <property type="term" value="P:tRNA processing"/>
    <property type="evidence" value="ECO:0007669"/>
    <property type="project" value="UniProtKB-UniRule"/>
</dbReference>
<dbReference type="FunFam" id="2.40.30.160:FF:000001">
    <property type="entry name" value="tRNA-modifying protein YgfZ"/>
    <property type="match status" value="1"/>
</dbReference>
<dbReference type="FunFam" id="3.30.70.1400:FF:000002">
    <property type="entry name" value="tRNA-modifying protein YgfZ"/>
    <property type="match status" value="1"/>
</dbReference>
<dbReference type="FunFam" id="3.30.70.1630:FF:000001">
    <property type="entry name" value="tRNA-modifying protein YgfZ"/>
    <property type="match status" value="1"/>
</dbReference>
<dbReference type="Gene3D" id="2.40.30.160">
    <property type="match status" value="1"/>
</dbReference>
<dbReference type="Gene3D" id="3.30.70.1630">
    <property type="match status" value="1"/>
</dbReference>
<dbReference type="Gene3D" id="3.30.70.1400">
    <property type="entry name" value="Aminomethyltransferase beta-barrel domains"/>
    <property type="match status" value="1"/>
</dbReference>
<dbReference type="HAMAP" id="MF_01175">
    <property type="entry name" value="tRNA_modifying_YgfZ"/>
    <property type="match status" value="1"/>
</dbReference>
<dbReference type="InterPro" id="IPR006222">
    <property type="entry name" value="GCV_T_N"/>
</dbReference>
<dbReference type="InterPro" id="IPR029043">
    <property type="entry name" value="GcvT/YgfZ_C"/>
</dbReference>
<dbReference type="InterPro" id="IPR023758">
    <property type="entry name" value="tRNA-modifying_YgfZ"/>
</dbReference>
<dbReference type="InterPro" id="IPR045179">
    <property type="entry name" value="YgfZ/GcvT"/>
</dbReference>
<dbReference type="InterPro" id="IPR017703">
    <property type="entry name" value="YgfZ/GcvT_CS"/>
</dbReference>
<dbReference type="InterPro" id="IPR048451">
    <property type="entry name" value="YgfZ_barrel"/>
</dbReference>
<dbReference type="NCBIfam" id="NF007110">
    <property type="entry name" value="PRK09559.1"/>
    <property type="match status" value="1"/>
</dbReference>
<dbReference type="NCBIfam" id="TIGR03317">
    <property type="entry name" value="ygfZ_signature"/>
    <property type="match status" value="1"/>
</dbReference>
<dbReference type="PANTHER" id="PTHR22602">
    <property type="entry name" value="TRANSFERASE CAF17, MITOCHONDRIAL-RELATED"/>
    <property type="match status" value="1"/>
</dbReference>
<dbReference type="PANTHER" id="PTHR22602:SF0">
    <property type="entry name" value="TRANSFERASE CAF17, MITOCHONDRIAL-RELATED"/>
    <property type="match status" value="1"/>
</dbReference>
<dbReference type="Pfam" id="PF01571">
    <property type="entry name" value="GCV_T"/>
    <property type="match status" value="1"/>
</dbReference>
<dbReference type="Pfam" id="PF21130">
    <property type="entry name" value="YgfZ_barrel"/>
    <property type="match status" value="1"/>
</dbReference>
<dbReference type="SUPFAM" id="SSF101790">
    <property type="entry name" value="Aminomethyltransferase beta-barrel domain"/>
    <property type="match status" value="1"/>
</dbReference>
<dbReference type="SUPFAM" id="SSF103025">
    <property type="entry name" value="Folate-binding domain"/>
    <property type="match status" value="1"/>
</dbReference>
<feature type="initiator methionine" description="Removed" evidence="1">
    <location>
        <position position="1"/>
    </location>
</feature>
<feature type="chain" id="PRO_0000262891" description="tRNA-modifying protein YgfZ">
    <location>
        <begin position="2"/>
        <end position="326"/>
    </location>
</feature>
<feature type="binding site" evidence="2">
    <location>
        <position position="27"/>
    </location>
    <ligand>
        <name>folate</name>
        <dbReference type="ChEBI" id="CHEBI:62501"/>
    </ligand>
</feature>
<feature type="binding site" evidence="2">
    <location>
        <position position="189"/>
    </location>
    <ligand>
        <name>folate</name>
        <dbReference type="ChEBI" id="CHEBI:62501"/>
    </ligand>
</feature>
<organism>
    <name type="scientific">Escherichia coli O6:H1 (strain CFT073 / ATCC 700928 / UPEC)</name>
    <dbReference type="NCBI Taxonomy" id="199310"/>
    <lineage>
        <taxon>Bacteria</taxon>
        <taxon>Pseudomonadati</taxon>
        <taxon>Pseudomonadota</taxon>
        <taxon>Gammaproteobacteria</taxon>
        <taxon>Enterobacterales</taxon>
        <taxon>Enterobacteriaceae</taxon>
        <taxon>Escherichia</taxon>
    </lineage>
</organism>
<reference key="1">
    <citation type="journal article" date="2002" name="Proc. Natl. Acad. Sci. U.S.A.">
        <title>Extensive mosaic structure revealed by the complete genome sequence of uropathogenic Escherichia coli.</title>
        <authorList>
            <person name="Welch R.A."/>
            <person name="Burland V."/>
            <person name="Plunkett G. III"/>
            <person name="Redford P."/>
            <person name="Roesch P."/>
            <person name="Rasko D."/>
            <person name="Buckles E.L."/>
            <person name="Liou S.-R."/>
            <person name="Boutin A."/>
            <person name="Hackett J."/>
            <person name="Stroud D."/>
            <person name="Mayhew G.F."/>
            <person name="Rose D.J."/>
            <person name="Zhou S."/>
            <person name="Schwartz D.C."/>
            <person name="Perna N.T."/>
            <person name="Mobley H.L.T."/>
            <person name="Donnenberg M.S."/>
            <person name="Blattner F.R."/>
        </authorList>
    </citation>
    <scope>NUCLEOTIDE SEQUENCE [LARGE SCALE GENOMIC DNA]</scope>
    <source>
        <strain>CFT073 / ATCC 700928 / UPEC</strain>
    </source>
</reference>
<name>YGFZ_ECOL6</name>
<protein>
    <recommendedName>
        <fullName evidence="2">tRNA-modifying protein YgfZ</fullName>
    </recommendedName>
</protein>